<protein>
    <recommendedName>
        <fullName>GTPase KRas</fullName>
        <ecNumber evidence="1">3.6.5.2</ecNumber>
    </recommendedName>
    <alternativeName>
        <fullName>Ki-Ras</fullName>
        <shortName>K-ras</shortName>
    </alternativeName>
</protein>
<gene>
    <name type="primary">kras1</name>
</gene>
<keyword id="KW-1003">Cell membrane</keyword>
<keyword id="KW-0963">Cytoplasm</keyword>
<keyword id="KW-0342">GTP-binding</keyword>
<keyword id="KW-0378">Hydrolase</keyword>
<keyword id="KW-0449">Lipoprotein</keyword>
<keyword id="KW-0472">Membrane</keyword>
<keyword id="KW-0488">Methylation</keyword>
<keyword id="KW-0547">Nucleotide-binding</keyword>
<keyword id="KW-0636">Prenylation</keyword>
<keyword id="KW-1185">Reference proteome</keyword>
<proteinExistence type="evidence at transcript level"/>
<accession>O42277</accession>
<reference key="1">
    <citation type="submission" date="1997-10" db="EMBL/GenBank/DDBJ databases">
        <title>Cloning of two c-Ki-ras cDNA gene sequences and a putative pseudogene from the medaka fish (Oryzias latipes).</title>
        <authorList>
            <person name="Clepper L.L."/>
            <person name="Van Beneden R.J."/>
        </authorList>
    </citation>
    <scope>NUCLEOTIDE SEQUENCE [MRNA]</scope>
    <source>
        <tissue>Liver</tissue>
    </source>
</reference>
<name>RASK_ORYLA</name>
<comment type="function">
    <text evidence="1">Ras proteins bind GDP/GTP and possess intrinsic GTPase activity (By similarity). Plays an important role in the regulation of cell proliferation.</text>
</comment>
<comment type="catalytic activity">
    <reaction evidence="1">
        <text>GTP + H2O = GDP + phosphate + H(+)</text>
        <dbReference type="Rhea" id="RHEA:19669"/>
        <dbReference type="ChEBI" id="CHEBI:15377"/>
        <dbReference type="ChEBI" id="CHEBI:15378"/>
        <dbReference type="ChEBI" id="CHEBI:37565"/>
        <dbReference type="ChEBI" id="CHEBI:43474"/>
        <dbReference type="ChEBI" id="CHEBI:58189"/>
        <dbReference type="EC" id="3.6.5.2"/>
    </reaction>
</comment>
<comment type="activity regulation">
    <text evidence="1">Alternates between an inactive form bound to GDP and an active form bound to GTP (By similarity). Activated by a guanine nucleotide-exchange factor (GEF) and inactivated by a GTPase-activating protein (GAP) (By similarity).</text>
</comment>
<comment type="subcellular location">
    <subcellularLocation>
        <location evidence="1">Cell membrane</location>
        <topology evidence="1">Lipid-anchor</topology>
        <orientation evidence="1">Cytoplasmic side</orientation>
    </subcellularLocation>
    <subcellularLocation>
        <location evidence="1">Cytoplasm</location>
    </subcellularLocation>
</comment>
<comment type="similarity">
    <text evidence="3">Belongs to the small GTPase superfamily. Ras family.</text>
</comment>
<dbReference type="EC" id="3.6.5.2" evidence="1"/>
<dbReference type="EMBL" id="AF030545">
    <property type="protein sequence ID" value="AAB86487.1"/>
    <property type="molecule type" value="mRNA"/>
</dbReference>
<dbReference type="RefSeq" id="XP_011474153.1">
    <property type="nucleotide sequence ID" value="XM_011475851.1"/>
</dbReference>
<dbReference type="BMRB" id="O42277"/>
<dbReference type="SMR" id="O42277"/>
<dbReference type="FunCoup" id="O42277">
    <property type="interactions" value="1352"/>
</dbReference>
<dbReference type="STRING" id="8090.ENSORLP00000031976"/>
<dbReference type="Ensembl" id="ENSORLT00000044860.1">
    <property type="protein sequence ID" value="ENSORLP00000041975.1"/>
    <property type="gene ID" value="ENSORLG00000024102.1"/>
</dbReference>
<dbReference type="Ensembl" id="ENSORLT00015017248.1">
    <property type="protein sequence ID" value="ENSORLP00015010623.1"/>
    <property type="gene ID" value="ENSORLG00015011467.1"/>
</dbReference>
<dbReference type="Ensembl" id="ENSORLT00020029220.1">
    <property type="protein sequence ID" value="ENSORLP00020034465.1"/>
    <property type="gene ID" value="ENSORLG00020020961.1"/>
</dbReference>
<dbReference type="GeneID" id="100049322"/>
<dbReference type="CTD" id="3845"/>
<dbReference type="eggNOG" id="KOG0395">
    <property type="taxonomic scope" value="Eukaryota"/>
</dbReference>
<dbReference type="GeneTree" id="ENSGT00940000155871"/>
<dbReference type="HOGENOM" id="CLU_041217_9_8_1"/>
<dbReference type="InParanoid" id="O42277"/>
<dbReference type="OMA" id="CCGGCVI"/>
<dbReference type="OrthoDB" id="5976022at2759"/>
<dbReference type="Proteomes" id="UP000001038">
    <property type="component" value="Chromosome 6"/>
</dbReference>
<dbReference type="Proteomes" id="UP000265180">
    <property type="component" value="Chromosome 6"/>
</dbReference>
<dbReference type="Proteomes" id="UP000265200">
    <property type="component" value="Chromosome 6"/>
</dbReference>
<dbReference type="Bgee" id="ENSORLG00000024102">
    <property type="expression patterns" value="Expressed in animal zygote and 14 other cell types or tissues"/>
</dbReference>
<dbReference type="GO" id="GO:0005737">
    <property type="term" value="C:cytoplasm"/>
    <property type="evidence" value="ECO:0000250"/>
    <property type="project" value="UniProtKB"/>
</dbReference>
<dbReference type="GO" id="GO:0009898">
    <property type="term" value="C:cytoplasmic side of plasma membrane"/>
    <property type="evidence" value="ECO:0000250"/>
    <property type="project" value="UniProtKB"/>
</dbReference>
<dbReference type="GO" id="GO:0005886">
    <property type="term" value="C:plasma membrane"/>
    <property type="evidence" value="ECO:0000318"/>
    <property type="project" value="GO_Central"/>
</dbReference>
<dbReference type="GO" id="GO:0003925">
    <property type="term" value="F:G protein activity"/>
    <property type="evidence" value="ECO:0007669"/>
    <property type="project" value="UniProtKB-EC"/>
</dbReference>
<dbReference type="GO" id="GO:0019003">
    <property type="term" value="F:GDP binding"/>
    <property type="evidence" value="ECO:0000318"/>
    <property type="project" value="GO_Central"/>
</dbReference>
<dbReference type="GO" id="GO:0005525">
    <property type="term" value="F:GTP binding"/>
    <property type="evidence" value="ECO:0000318"/>
    <property type="project" value="GO_Central"/>
</dbReference>
<dbReference type="GO" id="GO:0003924">
    <property type="term" value="F:GTPase activity"/>
    <property type="evidence" value="ECO:0000318"/>
    <property type="project" value="GO_Central"/>
</dbReference>
<dbReference type="GO" id="GO:0007265">
    <property type="term" value="P:Ras protein signal transduction"/>
    <property type="evidence" value="ECO:0000318"/>
    <property type="project" value="GO_Central"/>
</dbReference>
<dbReference type="CDD" id="cd04138">
    <property type="entry name" value="H_N_K_Ras_like"/>
    <property type="match status" value="1"/>
</dbReference>
<dbReference type="FunFam" id="3.40.50.300:FF:000096">
    <property type="entry name" value="KRAS proto-oncogene, GTPase"/>
    <property type="match status" value="1"/>
</dbReference>
<dbReference type="Gene3D" id="3.40.50.300">
    <property type="entry name" value="P-loop containing nucleotide triphosphate hydrolases"/>
    <property type="match status" value="1"/>
</dbReference>
<dbReference type="InterPro" id="IPR027417">
    <property type="entry name" value="P-loop_NTPase"/>
</dbReference>
<dbReference type="InterPro" id="IPR005225">
    <property type="entry name" value="Small_GTP-bd"/>
</dbReference>
<dbReference type="InterPro" id="IPR001806">
    <property type="entry name" value="Small_GTPase"/>
</dbReference>
<dbReference type="InterPro" id="IPR020849">
    <property type="entry name" value="Small_GTPase_Ras-type"/>
</dbReference>
<dbReference type="NCBIfam" id="TIGR00231">
    <property type="entry name" value="small_GTP"/>
    <property type="match status" value="1"/>
</dbReference>
<dbReference type="PANTHER" id="PTHR24070">
    <property type="entry name" value="RAS, DI-RAS, AND RHEB FAMILY MEMBERS OF SMALL GTPASE SUPERFAMILY"/>
    <property type="match status" value="1"/>
</dbReference>
<dbReference type="Pfam" id="PF00071">
    <property type="entry name" value="Ras"/>
    <property type="match status" value="1"/>
</dbReference>
<dbReference type="PRINTS" id="PR00449">
    <property type="entry name" value="RASTRNSFRMNG"/>
</dbReference>
<dbReference type="SMART" id="SM00175">
    <property type="entry name" value="RAB"/>
    <property type="match status" value="1"/>
</dbReference>
<dbReference type="SMART" id="SM00173">
    <property type="entry name" value="RAS"/>
    <property type="match status" value="1"/>
</dbReference>
<dbReference type="SMART" id="SM00174">
    <property type="entry name" value="RHO"/>
    <property type="match status" value="1"/>
</dbReference>
<dbReference type="SUPFAM" id="SSF52540">
    <property type="entry name" value="P-loop containing nucleoside triphosphate hydrolases"/>
    <property type="match status" value="1"/>
</dbReference>
<dbReference type="PROSITE" id="PS51421">
    <property type="entry name" value="RAS"/>
    <property type="match status" value="1"/>
</dbReference>
<organism>
    <name type="scientific">Oryzias latipes</name>
    <name type="common">Japanese rice fish</name>
    <name type="synonym">Japanese killifish</name>
    <dbReference type="NCBI Taxonomy" id="8090"/>
    <lineage>
        <taxon>Eukaryota</taxon>
        <taxon>Metazoa</taxon>
        <taxon>Chordata</taxon>
        <taxon>Craniata</taxon>
        <taxon>Vertebrata</taxon>
        <taxon>Euteleostomi</taxon>
        <taxon>Actinopterygii</taxon>
        <taxon>Neopterygii</taxon>
        <taxon>Teleostei</taxon>
        <taxon>Neoteleostei</taxon>
        <taxon>Acanthomorphata</taxon>
        <taxon>Ovalentaria</taxon>
        <taxon>Atherinomorphae</taxon>
        <taxon>Beloniformes</taxon>
        <taxon>Adrianichthyidae</taxon>
        <taxon>Oryziinae</taxon>
        <taxon>Oryzias</taxon>
    </lineage>
</organism>
<feature type="chain" id="PRO_0000082647" description="GTPase KRas">
    <location>
        <begin position="1"/>
        <end position="185"/>
    </location>
</feature>
<feature type="propeptide" id="PRO_0000281297" description="Removed in mature form" evidence="1">
    <location>
        <begin position="186"/>
        <end position="188"/>
    </location>
</feature>
<feature type="region of interest" description="Disordered" evidence="2">
    <location>
        <begin position="167"/>
        <end position="188"/>
    </location>
</feature>
<feature type="short sequence motif" description="Effector region">
    <location>
        <begin position="32"/>
        <end position="40"/>
    </location>
</feature>
<feature type="binding site" evidence="1">
    <location>
        <begin position="10"/>
        <end position="18"/>
    </location>
    <ligand>
        <name>GTP</name>
        <dbReference type="ChEBI" id="CHEBI:37565"/>
    </ligand>
</feature>
<feature type="binding site" evidence="1">
    <location>
        <begin position="29"/>
        <end position="35"/>
    </location>
    <ligand>
        <name>GTP</name>
        <dbReference type="ChEBI" id="CHEBI:37565"/>
    </ligand>
</feature>
<feature type="binding site" evidence="1">
    <location>
        <begin position="59"/>
        <end position="60"/>
    </location>
    <ligand>
        <name>GTP</name>
        <dbReference type="ChEBI" id="CHEBI:37565"/>
    </ligand>
</feature>
<feature type="binding site" evidence="1">
    <location>
        <begin position="116"/>
        <end position="119"/>
    </location>
    <ligand>
        <name>GTP</name>
        <dbReference type="ChEBI" id="CHEBI:37565"/>
    </ligand>
</feature>
<feature type="modified residue" description="Cysteine methyl ester" evidence="1">
    <location>
        <position position="185"/>
    </location>
</feature>
<feature type="lipid moiety-binding region" description="S-farnesyl cysteine" evidence="1">
    <location>
        <position position="185"/>
    </location>
</feature>
<sequence>MTEYKLVVVGAGGVGKSALTIQLIQNHFVDEYDPTIEDSYRKQVVIDGETCLLDILDTAGQEEYSAMRDQYMRTGEGFLCVFAINNTKSFEDIHHYREQIKRVKDSEDVPMVLVGNKCDLPTRTVDTKQAQDLARSFGIPFIETSAKTRQGVDDAFYTLVREIRKHKEKMSKEGKKKKKKSKTKCILM</sequence>
<evidence type="ECO:0000250" key="1">
    <source>
        <dbReference type="UniProtKB" id="P01116"/>
    </source>
</evidence>
<evidence type="ECO:0000256" key="2">
    <source>
        <dbReference type="SAM" id="MobiDB-lite"/>
    </source>
</evidence>
<evidence type="ECO:0000305" key="3"/>